<gene>
    <name type="primary">RAT1</name>
    <name type="ORF">FGRRES_10716</name>
    <name type="ORF">FGSG_10716</name>
</gene>
<protein>
    <recommendedName>
        <fullName>5'-3' exoribonuclease 2</fullName>
        <ecNumber>3.1.13.-</ecNumber>
    </recommendedName>
</protein>
<keyword id="KW-0175">Coiled coil</keyword>
<keyword id="KW-0269">Exonuclease</keyword>
<keyword id="KW-0378">Hydrolase</keyword>
<keyword id="KW-0479">Metal-binding</keyword>
<keyword id="KW-0507">mRNA processing</keyword>
<keyword id="KW-0540">Nuclease</keyword>
<keyword id="KW-0539">Nucleus</keyword>
<keyword id="KW-1185">Reference proteome</keyword>
<keyword id="KW-0698">rRNA processing</keyword>
<keyword id="KW-0804">Transcription</keyword>
<keyword id="KW-0805">Transcription regulation</keyword>
<keyword id="KW-0806">Transcription termination</keyword>
<keyword id="KW-0862">Zinc</keyword>
<keyword id="KW-0863">Zinc-finger</keyword>
<proteinExistence type="inferred from homology"/>
<organism>
    <name type="scientific">Gibberella zeae (strain ATCC MYA-4620 / CBS 123657 / FGSC 9075 / NRRL 31084 / PH-1)</name>
    <name type="common">Wheat head blight fungus</name>
    <name type="synonym">Fusarium graminearum</name>
    <dbReference type="NCBI Taxonomy" id="229533"/>
    <lineage>
        <taxon>Eukaryota</taxon>
        <taxon>Fungi</taxon>
        <taxon>Dikarya</taxon>
        <taxon>Ascomycota</taxon>
        <taxon>Pezizomycotina</taxon>
        <taxon>Sordariomycetes</taxon>
        <taxon>Hypocreomycetidae</taxon>
        <taxon>Hypocreales</taxon>
        <taxon>Nectriaceae</taxon>
        <taxon>Fusarium</taxon>
    </lineage>
</organism>
<feature type="initiator methionine" description="Removed" evidence="1">
    <location>
        <position position="1"/>
    </location>
</feature>
<feature type="chain" id="PRO_0000249926" description="5'-3' exoribonuclease 2">
    <location>
        <begin position="2"/>
        <end position="980"/>
    </location>
</feature>
<feature type="zinc finger region" description="CCHC-type" evidence="5">
    <location>
        <begin position="269"/>
        <end position="286"/>
    </location>
</feature>
<feature type="region of interest" description="Disordered" evidence="6">
    <location>
        <begin position="111"/>
        <end position="133"/>
    </location>
</feature>
<feature type="region of interest" description="Disordered" evidence="6">
    <location>
        <begin position="413"/>
        <end position="461"/>
    </location>
</feature>
<feature type="region of interest" description="Disordered" evidence="6">
    <location>
        <begin position="491"/>
        <end position="560"/>
    </location>
</feature>
<feature type="region of interest" description="Disordered" evidence="6">
    <location>
        <begin position="845"/>
        <end position="980"/>
    </location>
</feature>
<feature type="coiled-coil region" evidence="4">
    <location>
        <begin position="121"/>
        <end position="145"/>
    </location>
</feature>
<feature type="coiled-coil region" evidence="4">
    <location>
        <begin position="411"/>
        <end position="435"/>
    </location>
</feature>
<feature type="compositionally biased region" description="Basic and acidic residues" evidence="6">
    <location>
        <begin position="413"/>
        <end position="424"/>
    </location>
</feature>
<feature type="compositionally biased region" description="Polar residues" evidence="6">
    <location>
        <begin position="503"/>
        <end position="514"/>
    </location>
</feature>
<feature type="compositionally biased region" description="Polar residues" evidence="6">
    <location>
        <begin position="535"/>
        <end position="554"/>
    </location>
</feature>
<feature type="compositionally biased region" description="Pro residues" evidence="6">
    <location>
        <begin position="890"/>
        <end position="903"/>
    </location>
</feature>
<feature type="compositionally biased region" description="Basic and acidic residues" evidence="6">
    <location>
        <begin position="952"/>
        <end position="962"/>
    </location>
</feature>
<sequence length="980" mass="110362">MGIPAAFRWLSTRYPKIISPVIEDQPLVMEDGSTIPVDTTRPNPNGEEFDNLYLDMNGIVHPCSHPEDRPAPKDEEEMMMEVFRYTDRVVNMVRPRKILMIAVDGVAPRAKMNQQRSRRFRSAQEAQEKEQDKQELIKMLKQQNGGNLSTESLETVTKKAFDSNSITPGTPFMDILALSLRYWCQYKLNTDPGWAKLKIIISDATVPGEGEHKIMNFVRSQRASPDHDPNTRHVIYGLDADLIMLGLATHEPHFRVLREDVFFQDQKARLCKICGQKGHDAQNCRGEEKKKDGEHDEKDKGVALKPFIWLHVAVLREYLAVELGVPNLPFRFDLERAVDDWIFMCCFVGNDFLPHLPALEIREHGIDTLTKIWKDNLPVMGGYVTKDGHIDLERAQVILDGLAQQEDNIFKRRKEQEDRREANFKRRKLQNEVNGRGGRQGGPSHPKKINGHENPENGLPLQAVGAYTGRHEQTLTHDMVVNRSTAPDANVANKSAASVLKAQLQSQKSLSNPKPENPEQESPSALGKRKASSIEEGNSSVPDAASVSTPSTSAEEGPVDDVRLWEDGYADRYYEKKFHKDPKDIEFRHGVGRAYVEGLAWVLLYYFQGCPSWEWYYPYHYAPFAADFKDIAKMNISFEKGRVSKPFEQLMSVLPAASRHALPEVFHDLMLNPESNIIDFYPEDFEIDLNGKKFAWQGVALLPFIEMPRLLAAVQSKYPELSAADSARNEMGRDVLIFSEGHESLYDEVLTKFYSKKQGDSKFKLNPKKSDGLSGRVEKKEGYVPHSELKYPLERNSMPDLDYDRSVSVYYDFPQASQTHKSMLLRGVQLPTPALTQNDIQDMRSRANRGGRGGFGRGHDRGGYNGPGMTRGSQYNRNQGGYGRGNGHYPPAPASHVPPPPGAPGFGIGVPPPPPPNSYHNQPYDNRYGASSGYNQYRGPPHPANGAPGYHGHGDASSERGRGSGGYSSRGRYRDNRSYR</sequence>
<comment type="function">
    <text evidence="2 3">Possesses 5'-&gt;3' exoribonuclease activity (By similarity). Required for the processing of nuclear mRNA and rRNA precursors. May promote the termination of transcription by RNA polymerase II (By similarity). Essential for vegetative cell growth and chromosome segregation (By similarity).</text>
</comment>
<comment type="subunit">
    <text evidence="2">Interacts with RAI1; the interaction is direct, stabilizes RAT1 protein structure and may stimulate its exoribonuclease activity (By similarity). The interaction also stimulates RAI1 pyrophosphohydrolase activity, probably by recruiting it to mRNA substrates (By similarity).</text>
</comment>
<comment type="subcellular location">
    <subcellularLocation>
        <location evidence="1">Nucleus</location>
    </subcellularLocation>
</comment>
<comment type="similarity">
    <text evidence="7">Belongs to the 5'-3' exonuclease family. XRN2/RAT1 subfamily.</text>
</comment>
<name>XRN2_GIBZE</name>
<reference key="1">
    <citation type="journal article" date="2007" name="Science">
        <title>The Fusarium graminearum genome reveals a link between localized polymorphism and pathogen specialization.</title>
        <authorList>
            <person name="Cuomo C.A."/>
            <person name="Gueldener U."/>
            <person name="Xu J.-R."/>
            <person name="Trail F."/>
            <person name="Turgeon B.G."/>
            <person name="Di Pietro A."/>
            <person name="Walton J.D."/>
            <person name="Ma L.-J."/>
            <person name="Baker S.E."/>
            <person name="Rep M."/>
            <person name="Adam G."/>
            <person name="Antoniw J."/>
            <person name="Baldwin T."/>
            <person name="Calvo S.E."/>
            <person name="Chang Y.-L."/>
            <person name="DeCaprio D."/>
            <person name="Gale L.R."/>
            <person name="Gnerre S."/>
            <person name="Goswami R.S."/>
            <person name="Hammond-Kosack K."/>
            <person name="Harris L.J."/>
            <person name="Hilburn K."/>
            <person name="Kennell J.C."/>
            <person name="Kroken S."/>
            <person name="Magnuson J.K."/>
            <person name="Mannhaupt G."/>
            <person name="Mauceli E.W."/>
            <person name="Mewes H.-W."/>
            <person name="Mitterbauer R."/>
            <person name="Muehlbauer G."/>
            <person name="Muensterkoetter M."/>
            <person name="Nelson D."/>
            <person name="O'Donnell K."/>
            <person name="Ouellet T."/>
            <person name="Qi W."/>
            <person name="Quesneville H."/>
            <person name="Roncero M.I.G."/>
            <person name="Seong K.-Y."/>
            <person name="Tetko I.V."/>
            <person name="Urban M."/>
            <person name="Waalwijk C."/>
            <person name="Ward T.J."/>
            <person name="Yao J."/>
            <person name="Birren B.W."/>
            <person name="Kistler H.C."/>
        </authorList>
    </citation>
    <scope>NUCLEOTIDE SEQUENCE [LARGE SCALE GENOMIC DNA]</scope>
    <source>
        <strain>ATCC MYA-4620 / CBS 123657 / FGSC 9075 / NRRL 31084 / PH-1</strain>
    </source>
</reference>
<reference key="2">
    <citation type="journal article" date="2010" name="Nature">
        <title>Comparative genomics reveals mobile pathogenicity chromosomes in Fusarium.</title>
        <authorList>
            <person name="Ma L.-J."/>
            <person name="van der Does H.C."/>
            <person name="Borkovich K.A."/>
            <person name="Coleman J.J."/>
            <person name="Daboussi M.-J."/>
            <person name="Di Pietro A."/>
            <person name="Dufresne M."/>
            <person name="Freitag M."/>
            <person name="Grabherr M."/>
            <person name="Henrissat B."/>
            <person name="Houterman P.M."/>
            <person name="Kang S."/>
            <person name="Shim W.-B."/>
            <person name="Woloshuk C."/>
            <person name="Xie X."/>
            <person name="Xu J.-R."/>
            <person name="Antoniw J."/>
            <person name="Baker S.E."/>
            <person name="Bluhm B.H."/>
            <person name="Breakspear A."/>
            <person name="Brown D.W."/>
            <person name="Butchko R.A.E."/>
            <person name="Chapman S."/>
            <person name="Coulson R."/>
            <person name="Coutinho P.M."/>
            <person name="Danchin E.G.J."/>
            <person name="Diener A."/>
            <person name="Gale L.R."/>
            <person name="Gardiner D.M."/>
            <person name="Goff S."/>
            <person name="Hammond-Kosack K.E."/>
            <person name="Hilburn K."/>
            <person name="Hua-Van A."/>
            <person name="Jonkers W."/>
            <person name="Kazan K."/>
            <person name="Kodira C.D."/>
            <person name="Koehrsen M."/>
            <person name="Kumar L."/>
            <person name="Lee Y.-H."/>
            <person name="Li L."/>
            <person name="Manners J.M."/>
            <person name="Miranda-Saavedra D."/>
            <person name="Mukherjee M."/>
            <person name="Park G."/>
            <person name="Park J."/>
            <person name="Park S.-Y."/>
            <person name="Proctor R.H."/>
            <person name="Regev A."/>
            <person name="Ruiz-Roldan M.C."/>
            <person name="Sain D."/>
            <person name="Sakthikumar S."/>
            <person name="Sykes S."/>
            <person name="Schwartz D.C."/>
            <person name="Turgeon B.G."/>
            <person name="Wapinski I."/>
            <person name="Yoder O."/>
            <person name="Young S."/>
            <person name="Zeng Q."/>
            <person name="Zhou S."/>
            <person name="Galagan J."/>
            <person name="Cuomo C.A."/>
            <person name="Kistler H.C."/>
            <person name="Rep M."/>
        </authorList>
    </citation>
    <scope>GENOME REANNOTATION</scope>
    <source>
        <strain>ATCC MYA-4620 / CBS 123657 / FGSC 9075 / NRRL 31084 / PH-1</strain>
    </source>
</reference>
<reference key="3">
    <citation type="journal article" date="2015" name="BMC Genomics">
        <title>The completed genome sequence of the pathogenic ascomycete fungus Fusarium graminearum.</title>
        <authorList>
            <person name="King R."/>
            <person name="Urban M."/>
            <person name="Hammond-Kosack M.C.U."/>
            <person name="Hassani-Pak K."/>
            <person name="Hammond-Kosack K.E."/>
        </authorList>
    </citation>
    <scope>NUCLEOTIDE SEQUENCE [LARGE SCALE GENOMIC DNA]</scope>
    <source>
        <strain>ATCC MYA-4620 / CBS 123657 / FGSC 9075 / NRRL 31084 / PH-1</strain>
    </source>
</reference>
<accession>Q4HWE2</accession>
<accession>A0A0E0SQD3</accession>
<accession>V6S144</accession>
<evidence type="ECO:0000250" key="1"/>
<evidence type="ECO:0000250" key="2">
    <source>
        <dbReference type="UniProtKB" id="P40848"/>
    </source>
</evidence>
<evidence type="ECO:0000250" key="3">
    <source>
        <dbReference type="UniProtKB" id="Q02792"/>
    </source>
</evidence>
<evidence type="ECO:0000255" key="4"/>
<evidence type="ECO:0000255" key="5">
    <source>
        <dbReference type="PROSITE-ProRule" id="PRU00047"/>
    </source>
</evidence>
<evidence type="ECO:0000256" key="6">
    <source>
        <dbReference type="SAM" id="MobiDB-lite"/>
    </source>
</evidence>
<evidence type="ECO:0000305" key="7"/>
<dbReference type="EC" id="3.1.13.-"/>
<dbReference type="EMBL" id="DS231670">
    <property type="protein sequence ID" value="ESU18075.1"/>
    <property type="molecule type" value="Genomic_DNA"/>
</dbReference>
<dbReference type="EMBL" id="HG970334">
    <property type="protein sequence ID" value="CEF88646.1"/>
    <property type="molecule type" value="Genomic_DNA"/>
</dbReference>
<dbReference type="RefSeq" id="XP_011325697.1">
    <property type="nucleotide sequence ID" value="XM_011327395.1"/>
</dbReference>
<dbReference type="SMR" id="Q4HWE2"/>
<dbReference type="FunCoup" id="Q4HWE2">
    <property type="interactions" value="1092"/>
</dbReference>
<dbReference type="STRING" id="229533.Q4HWE2"/>
<dbReference type="GeneID" id="23557604"/>
<dbReference type="KEGG" id="fgr:FGSG_10716"/>
<dbReference type="VEuPathDB" id="FungiDB:FGRAMPH1_01G20287"/>
<dbReference type="eggNOG" id="KOG2044">
    <property type="taxonomic scope" value="Eukaryota"/>
</dbReference>
<dbReference type="HOGENOM" id="CLU_006038_1_1_1"/>
<dbReference type="InParanoid" id="Q4HWE2"/>
<dbReference type="OrthoDB" id="119784at110618"/>
<dbReference type="PHI-base" id="PHI:1671"/>
<dbReference type="Proteomes" id="UP000070720">
    <property type="component" value="Chromosome 3"/>
</dbReference>
<dbReference type="GO" id="GO:0005634">
    <property type="term" value="C:nucleus"/>
    <property type="evidence" value="ECO:0007669"/>
    <property type="project" value="UniProtKB-SubCell"/>
</dbReference>
<dbReference type="GO" id="GO:0004534">
    <property type="term" value="F:5'-3' RNA exonuclease activity"/>
    <property type="evidence" value="ECO:0007669"/>
    <property type="project" value="InterPro"/>
</dbReference>
<dbReference type="GO" id="GO:0003723">
    <property type="term" value="F:RNA binding"/>
    <property type="evidence" value="ECO:0007669"/>
    <property type="project" value="TreeGrafter"/>
</dbReference>
<dbReference type="GO" id="GO:0008270">
    <property type="term" value="F:zinc ion binding"/>
    <property type="evidence" value="ECO:0007669"/>
    <property type="project" value="UniProtKB-KW"/>
</dbReference>
<dbReference type="GO" id="GO:0006353">
    <property type="term" value="P:DNA-templated transcription termination"/>
    <property type="evidence" value="ECO:0007669"/>
    <property type="project" value="UniProtKB-KW"/>
</dbReference>
<dbReference type="GO" id="GO:0006397">
    <property type="term" value="P:mRNA processing"/>
    <property type="evidence" value="ECO:0007669"/>
    <property type="project" value="UniProtKB-KW"/>
</dbReference>
<dbReference type="GO" id="GO:0000956">
    <property type="term" value="P:nuclear-transcribed mRNA catabolic process"/>
    <property type="evidence" value="ECO:0007669"/>
    <property type="project" value="TreeGrafter"/>
</dbReference>
<dbReference type="GO" id="GO:0006364">
    <property type="term" value="P:rRNA processing"/>
    <property type="evidence" value="ECO:0007669"/>
    <property type="project" value="UniProtKB-KW"/>
</dbReference>
<dbReference type="CDD" id="cd18673">
    <property type="entry name" value="PIN_XRN1-2-like"/>
    <property type="match status" value="1"/>
</dbReference>
<dbReference type="FunFam" id="1.25.40.1050:FF:000002">
    <property type="entry name" value="5'-3' exoribonuclease"/>
    <property type="match status" value="1"/>
</dbReference>
<dbReference type="FunFam" id="3.40.50.12390:FF:000003">
    <property type="entry name" value="5'-3' exoribonuclease"/>
    <property type="match status" value="1"/>
</dbReference>
<dbReference type="FunFam" id="3.40.50.12390:FF:000005">
    <property type="entry name" value="5'-3' exoribonuclease 2"/>
    <property type="match status" value="1"/>
</dbReference>
<dbReference type="Gene3D" id="1.25.40.1050">
    <property type="match status" value="1"/>
</dbReference>
<dbReference type="Gene3D" id="3.40.50.12390">
    <property type="match status" value="2"/>
</dbReference>
<dbReference type="InterPro" id="IPR027073">
    <property type="entry name" value="5_3_exoribonuclease"/>
</dbReference>
<dbReference type="InterPro" id="IPR041412">
    <property type="entry name" value="Xrn1_helical"/>
</dbReference>
<dbReference type="InterPro" id="IPR004859">
    <property type="entry name" value="Xrn1_N"/>
</dbReference>
<dbReference type="InterPro" id="IPR017151">
    <property type="entry name" value="Xrn2/3/4"/>
</dbReference>
<dbReference type="InterPro" id="IPR001878">
    <property type="entry name" value="Znf_CCHC"/>
</dbReference>
<dbReference type="PANTHER" id="PTHR12341:SF41">
    <property type="entry name" value="5'-3' EXORIBONUCLEASE 2"/>
    <property type="match status" value="1"/>
</dbReference>
<dbReference type="PANTHER" id="PTHR12341">
    <property type="entry name" value="5'-&gt;3' EXORIBONUCLEASE"/>
    <property type="match status" value="1"/>
</dbReference>
<dbReference type="Pfam" id="PF17846">
    <property type="entry name" value="XRN_M"/>
    <property type="match status" value="1"/>
</dbReference>
<dbReference type="Pfam" id="PF03159">
    <property type="entry name" value="XRN_N"/>
    <property type="match status" value="1"/>
</dbReference>
<dbReference type="PIRSF" id="PIRSF037239">
    <property type="entry name" value="Exonuclease_Xrn2"/>
    <property type="match status" value="1"/>
</dbReference>
<dbReference type="PROSITE" id="PS50158">
    <property type="entry name" value="ZF_CCHC"/>
    <property type="match status" value="1"/>
</dbReference>